<protein>
    <recommendedName>
        <fullName evidence="5">Karrikin insensitive 2 receptor B</fullName>
        <shortName evidence="5">PhKAI2ib</shortName>
        <ecNumber>3.1.-.-</ecNumber>
    </recommendedName>
</protein>
<accession>P0DXI7</accession>
<keyword id="KW-0963">Cytoplasm</keyword>
<keyword id="KW-0378">Hydrolase</keyword>
<keyword id="KW-0539">Nucleus</keyword>
<dbReference type="EC" id="3.1.-.-"/>
<dbReference type="EMBL" id="OR700011">
    <property type="protein sequence ID" value="WVR18521.1"/>
    <property type="molecule type" value="mRNA"/>
</dbReference>
<dbReference type="GO" id="GO:0005737">
    <property type="term" value="C:cytoplasm"/>
    <property type="evidence" value="ECO:0007669"/>
    <property type="project" value="UniProtKB-SubCell"/>
</dbReference>
<dbReference type="GO" id="GO:0005634">
    <property type="term" value="C:nucleus"/>
    <property type="evidence" value="ECO:0007669"/>
    <property type="project" value="UniProtKB-SubCell"/>
</dbReference>
<dbReference type="GO" id="GO:0016787">
    <property type="term" value="F:hydrolase activity"/>
    <property type="evidence" value="ECO:0007669"/>
    <property type="project" value="UniProtKB-KW"/>
</dbReference>
<dbReference type="FunFam" id="3.40.50.1820:FF:000042">
    <property type="entry name" value="probable strigolactone esterase DAD2"/>
    <property type="match status" value="1"/>
</dbReference>
<dbReference type="Gene3D" id="3.40.50.1820">
    <property type="entry name" value="alpha/beta hydrolase"/>
    <property type="match status" value="1"/>
</dbReference>
<dbReference type="InterPro" id="IPR000073">
    <property type="entry name" value="AB_hydrolase_1"/>
</dbReference>
<dbReference type="InterPro" id="IPR029058">
    <property type="entry name" value="AB_hydrolase_fold"/>
</dbReference>
<dbReference type="PANTHER" id="PTHR43039">
    <property type="entry name" value="ESTERASE-RELATED"/>
    <property type="match status" value="1"/>
</dbReference>
<dbReference type="Pfam" id="PF12697">
    <property type="entry name" value="Abhydrolase_6"/>
    <property type="match status" value="1"/>
</dbReference>
<dbReference type="SUPFAM" id="SSF53474">
    <property type="entry name" value="alpha/beta-Hydrolases"/>
    <property type="match status" value="1"/>
</dbReference>
<reference key="1">
    <citation type="journal article" date="2024" name="Science">
        <title>Volatile communication in plants relies on a KAI2-mediated signaling pathway.</title>
        <authorList>
            <person name="Stirling S.A."/>
            <person name="Guercio A.M."/>
            <person name="Partrick R.M."/>
            <person name="Huang X.-Q."/>
            <person name="Bergman M.E."/>
            <person name="Dwivedi V."/>
            <person name="Kortbeek R.W.J."/>
            <person name="Liu Y.-K."/>
            <person name="Sun F."/>
            <person name="Tao W.A."/>
            <person name="Li Y."/>
            <person name="Boachon B."/>
            <person name="Shabek N."/>
            <person name="Dudareva N."/>
        </authorList>
    </citation>
    <scope>NUCLEOTIDE SEQUENCE [MRNA]</scope>
    <scope>TISSUE SPECIFICITY</scope>
    <scope>GENE FAMILY</scope>
    <scope>NOMENCLATURE</scope>
    <source>
        <strain>cv. Mitchell</strain>
    </source>
</reference>
<name>KI2IB_PETHY</name>
<evidence type="ECO:0000250" key="1">
    <source>
        <dbReference type="UniProtKB" id="J9U5U9"/>
    </source>
</evidence>
<evidence type="ECO:0000250" key="2">
    <source>
        <dbReference type="UniProtKB" id="P0DXI6"/>
    </source>
</evidence>
<evidence type="ECO:0000250" key="3">
    <source>
        <dbReference type="UniProtKB" id="Q10QA5"/>
    </source>
</evidence>
<evidence type="ECO:0000269" key="4">
    <source>
    </source>
</evidence>
<evidence type="ECO:0000303" key="5">
    <source>
    </source>
</evidence>
<evidence type="ECO:0000305" key="6"/>
<comment type="function">
    <text evidence="2">May be involved in plant olfaction during volatile communication.</text>
</comment>
<comment type="subcellular location">
    <subcellularLocation>
        <location evidence="2">Nucleus</location>
    </subcellularLocation>
    <subcellularLocation>
        <location evidence="2">Cytoplasm</location>
    </subcellularLocation>
</comment>
<comment type="tissue specificity">
    <text evidence="4">Expressed in stigma.</text>
</comment>
<comment type="similarity">
    <text evidence="6">Belongs to the AB hydrolase superfamily.</text>
</comment>
<sequence length="273" mass="30345">MSIVKEAHNVKVLGSGEKTIVLGHGFGTDQSVWKHLVPYLIDEYRVVLYDNMGAGPTNPDYFDFHRYSSLEGYAYDLLSILEELEIKCCIYLGHSSSAMTGVVASIFRPDLFSKLILVSASPRFLNTDDYYGGFELEEIDQLCQAMESNYKAWIAGFAPLVVGGDMDSVAVQEFSRTLFNMRPDIALSVFRTVFTFDLRHFLSQVTVPCHIIQSSLDVAVPVAVSQYLHQNLGGMSIVEIISTEGADCFGSYRRGSEMETKRGSDDAVTIALR</sequence>
<organism>
    <name type="scientific">Petunia hybrida</name>
    <name type="common">Petunia</name>
    <dbReference type="NCBI Taxonomy" id="4102"/>
    <lineage>
        <taxon>Eukaryota</taxon>
        <taxon>Viridiplantae</taxon>
        <taxon>Streptophyta</taxon>
        <taxon>Embryophyta</taxon>
        <taxon>Tracheophyta</taxon>
        <taxon>Spermatophyta</taxon>
        <taxon>Magnoliopsida</taxon>
        <taxon>eudicotyledons</taxon>
        <taxon>Gunneridae</taxon>
        <taxon>Pentapetalae</taxon>
        <taxon>asterids</taxon>
        <taxon>lamiids</taxon>
        <taxon>Solanales</taxon>
        <taxon>Solanaceae</taxon>
        <taxon>Petunioideae</taxon>
        <taxon>Petunia</taxon>
    </lineage>
</organism>
<feature type="chain" id="PRO_0000461708" description="Karrikin insensitive 2 receptor B">
    <location>
        <begin position="1"/>
        <end position="273"/>
    </location>
</feature>
<feature type="active site" description="Nucleophile" evidence="1">
    <location>
        <position position="95"/>
    </location>
</feature>
<feature type="active site" evidence="3">
    <location>
        <position position="217"/>
    </location>
</feature>
<proteinExistence type="evidence at transcript level"/>
<gene>
    <name evidence="5" type="primary">KAI2IB</name>
</gene>